<evidence type="ECO:0000255" key="1"/>
<evidence type="ECO:0000269" key="2">
    <source>
    </source>
</evidence>
<evidence type="ECO:0000269" key="3">
    <source>
    </source>
</evidence>
<evidence type="ECO:0000305" key="4"/>
<name>UP4_PINMA</name>
<proteinExistence type="evidence at protein level"/>
<accession>P86968</accession>
<keyword id="KW-0903">Direct protein sequencing</keyword>
<keyword id="KW-0964">Secreted</keyword>
<keyword id="KW-0732">Signal</keyword>
<dbReference type="EMBL" id="GT278733">
    <property type="status" value="NOT_ANNOTATED_CDS"/>
    <property type="molecule type" value="mRNA"/>
</dbReference>
<dbReference type="GO" id="GO:0005576">
    <property type="term" value="C:extracellular region"/>
    <property type="evidence" value="ECO:0007669"/>
    <property type="project" value="UniProtKB-SubCell"/>
</dbReference>
<sequence>MKYVALAFVLSLVILQISAQGGGLTSLLLQKEYMPDSWFDYKLAQMILGGPTGRKSRTQSGRNQRKSNSDSWLWLALAN</sequence>
<comment type="subcellular location">
    <subcellularLocation>
        <location evidence="3">Secreted</location>
    </subcellularLocation>
</comment>
<comment type="tissue specificity">
    <text evidence="3">Nacreous layer of shell (at protein level). Expressed primarily in the mantle with highest level in the mantle pallium and lower level in the mantle edge.</text>
</comment>
<organism>
    <name type="scientific">Pinctada maxima</name>
    <name type="common">Silver-lipped pearl oyster</name>
    <name type="synonym">White-lipped pearl oyster</name>
    <dbReference type="NCBI Taxonomy" id="104660"/>
    <lineage>
        <taxon>Eukaryota</taxon>
        <taxon>Metazoa</taxon>
        <taxon>Spiralia</taxon>
        <taxon>Lophotrochozoa</taxon>
        <taxon>Mollusca</taxon>
        <taxon>Bivalvia</taxon>
        <taxon>Autobranchia</taxon>
        <taxon>Pteriomorphia</taxon>
        <taxon>Pterioida</taxon>
        <taxon>Pterioidea</taxon>
        <taxon>Pteriidae</taxon>
        <taxon>Pinctada</taxon>
    </lineage>
</organism>
<feature type="signal peptide" evidence="1">
    <location>
        <begin position="1"/>
        <end position="19"/>
    </location>
</feature>
<feature type="chain" id="PRO_0000412721" description="Uncharacterized shell protein 4" evidence="1">
    <location>
        <begin position="20"/>
        <end position="79"/>
    </location>
</feature>
<protein>
    <recommendedName>
        <fullName>Uncharacterized shell protein 4</fullName>
    </recommendedName>
    <alternativeName>
        <fullName>Nacre uncharacterized shell protein 6</fullName>
        <shortName>NUSP6</shortName>
    </alternativeName>
</protein>
<reference evidence="4" key="1">
    <citation type="journal article" date="2010" name="Mol. Biol. Evol.">
        <title>Parallel evolution of nacre building gene sets in molluscs.</title>
        <authorList>
            <person name="Jackson D.J."/>
            <person name="McDougall C."/>
            <person name="Woodcroft B."/>
            <person name="Moase P."/>
            <person name="Rose R.A."/>
            <person name="Kube M."/>
            <person name="Reinhardt R."/>
            <person name="Rokhsar D.S."/>
            <person name="Montagnani C."/>
            <person name="Joubert C."/>
            <person name="Piquemal D."/>
            <person name="Degnan B.M."/>
        </authorList>
    </citation>
    <scope>NUCLEOTIDE SEQUENCE [MRNA]</scope>
    <scope>IDENTIFICATION</scope>
    <source>
        <tissue evidence="2">Mantle</tissue>
    </source>
</reference>
<reference key="2">
    <citation type="journal article" date="2012" name="Proc. Natl. Acad. Sci. U.S.A.">
        <title>Different secretory repertoires control the biomineralization processes of prism and nacre deposition of the pearl oyster shell.</title>
        <authorList>
            <person name="Marie B."/>
            <person name="Joubert C."/>
            <person name="Tayale A."/>
            <person name="Zanella-Cleon I."/>
            <person name="Belliard C."/>
            <person name="Piquemal D."/>
            <person name="Cochennec-Laureau N."/>
            <person name="Marin F."/>
            <person name="Gueguen Y."/>
            <person name="Montagnani C."/>
        </authorList>
    </citation>
    <scope>PROTEIN SEQUENCE OF 42-54</scope>
    <scope>SUBCELLULAR LOCATION</scope>
    <scope>TISSUE SPECIFICITY</scope>
    <source>
        <tissue>Shell</tissue>
    </source>
</reference>